<name>GSHB_NITEU</name>
<feature type="chain" id="PRO_0000197471" description="Glutathione synthetase">
    <location>
        <begin position="1"/>
        <end position="320"/>
    </location>
</feature>
<feature type="domain" description="ATP-grasp" evidence="2">
    <location>
        <begin position="127"/>
        <end position="312"/>
    </location>
</feature>
<feature type="binding site" evidence="2">
    <location>
        <begin position="153"/>
        <end position="209"/>
    </location>
    <ligand>
        <name>ATP</name>
        <dbReference type="ChEBI" id="CHEBI:30616"/>
    </ligand>
</feature>
<feature type="binding site" evidence="2">
    <location>
        <position position="283"/>
    </location>
    <ligand>
        <name>Mg(2+)</name>
        <dbReference type="ChEBI" id="CHEBI:18420"/>
    </ligand>
</feature>
<feature type="binding site" evidence="2">
    <location>
        <position position="285"/>
    </location>
    <ligand>
        <name>Mg(2+)</name>
        <dbReference type="ChEBI" id="CHEBI:18420"/>
    </ligand>
</feature>
<proteinExistence type="inferred from homology"/>
<comment type="catalytic activity">
    <reaction evidence="2">
        <text>gamma-L-glutamyl-L-cysteine + glycine + ATP = glutathione + ADP + phosphate + H(+)</text>
        <dbReference type="Rhea" id="RHEA:13557"/>
        <dbReference type="ChEBI" id="CHEBI:15378"/>
        <dbReference type="ChEBI" id="CHEBI:30616"/>
        <dbReference type="ChEBI" id="CHEBI:43474"/>
        <dbReference type="ChEBI" id="CHEBI:57305"/>
        <dbReference type="ChEBI" id="CHEBI:57925"/>
        <dbReference type="ChEBI" id="CHEBI:58173"/>
        <dbReference type="ChEBI" id="CHEBI:456216"/>
        <dbReference type="EC" id="6.3.2.3"/>
    </reaction>
</comment>
<comment type="cofactor">
    <cofactor evidence="1">
        <name>Mg(2+)</name>
        <dbReference type="ChEBI" id="CHEBI:18420"/>
    </cofactor>
    <cofactor evidence="1">
        <name>Mn(2+)</name>
        <dbReference type="ChEBI" id="CHEBI:29035"/>
    </cofactor>
    <text evidence="1">Binds 1 Mg(2+) or Mn(2+) ion per subunit.</text>
</comment>
<comment type="pathway">
    <text evidence="2">Sulfur metabolism; glutathione biosynthesis; glutathione from L-cysteine and L-glutamate: step 2/2.</text>
</comment>
<comment type="similarity">
    <text evidence="2">Belongs to the prokaryotic GSH synthase family.</text>
</comment>
<reference key="1">
    <citation type="journal article" date="2003" name="J. Bacteriol.">
        <title>Complete genome sequence of the ammonia-oxidizing bacterium and obligate chemolithoautotroph Nitrosomonas europaea.</title>
        <authorList>
            <person name="Chain P."/>
            <person name="Lamerdin J.E."/>
            <person name="Larimer F.W."/>
            <person name="Regala W."/>
            <person name="Lao V."/>
            <person name="Land M.L."/>
            <person name="Hauser L."/>
            <person name="Hooper A.B."/>
            <person name="Klotz M.G."/>
            <person name="Norton J."/>
            <person name="Sayavedra-Soto L.A."/>
            <person name="Arciero D.M."/>
            <person name="Hommes N.G."/>
            <person name="Whittaker M.M."/>
            <person name="Arp D.J."/>
        </authorList>
    </citation>
    <scope>NUCLEOTIDE SEQUENCE [LARGE SCALE GENOMIC DNA]</scope>
    <source>
        <strain>ATCC 19718 / CIP 103999 / KCTC 2705 / NBRC 14298</strain>
    </source>
</reference>
<gene>
    <name evidence="2" type="primary">gshB</name>
    <name type="ordered locus">NE1295</name>
</gene>
<protein>
    <recommendedName>
        <fullName evidence="2">Glutathione synthetase</fullName>
        <ecNumber evidence="2">6.3.2.3</ecNumber>
    </recommendedName>
    <alternativeName>
        <fullName evidence="2">GSH synthetase</fullName>
        <shortName evidence="2">GSH-S</shortName>
        <shortName evidence="2">GSHase</shortName>
    </alternativeName>
    <alternativeName>
        <fullName evidence="2">Glutathione synthase</fullName>
    </alternativeName>
</protein>
<accession>Q82V16</accession>
<organism>
    <name type="scientific">Nitrosomonas europaea (strain ATCC 19718 / CIP 103999 / KCTC 2705 / NBRC 14298)</name>
    <dbReference type="NCBI Taxonomy" id="228410"/>
    <lineage>
        <taxon>Bacteria</taxon>
        <taxon>Pseudomonadati</taxon>
        <taxon>Pseudomonadota</taxon>
        <taxon>Betaproteobacteria</taxon>
        <taxon>Nitrosomonadales</taxon>
        <taxon>Nitrosomonadaceae</taxon>
        <taxon>Nitrosomonas</taxon>
    </lineage>
</organism>
<sequence length="320" mass="35793">MKLAFILDPLDSIKIGKDSSYAMMREAAVRHHQLYTLQQNDLAWKDHQVIGFARPLTLLDPPEGDHRWYEEGAIEEIPLSGFDAVLMRKDPPFDTEYIYSTYLLELAERQGAYVVNSPRGIRDHNEKLAITEFPRFTPPSLVTSQEQLILEFLAEHEDIILKPLDGMGGAGIFRIQNTDHNIGVIIETLTRYGTRTIMAQRFLPEIREGDKRILLIAGRPVDYALARIPKPGETRGNLAAGGTGVARPLSARDREIAEELGQILYARGLMLVGLDVIGNHLTEINVTSPTGMREISDQTGTNVAGLMIDALEQNIARKNR</sequence>
<dbReference type="EC" id="6.3.2.3" evidence="2"/>
<dbReference type="EMBL" id="AL954747">
    <property type="protein sequence ID" value="CAD85206.1"/>
    <property type="molecule type" value="Genomic_DNA"/>
</dbReference>
<dbReference type="RefSeq" id="WP_011111873.1">
    <property type="nucleotide sequence ID" value="NC_004757.1"/>
</dbReference>
<dbReference type="SMR" id="Q82V16"/>
<dbReference type="STRING" id="228410.NE1295"/>
<dbReference type="GeneID" id="87104470"/>
<dbReference type="KEGG" id="neu:NE1295"/>
<dbReference type="eggNOG" id="COG0189">
    <property type="taxonomic scope" value="Bacteria"/>
</dbReference>
<dbReference type="HOGENOM" id="CLU_068239_0_0_4"/>
<dbReference type="OrthoDB" id="9785415at2"/>
<dbReference type="PhylomeDB" id="Q82V16"/>
<dbReference type="UniPathway" id="UPA00142">
    <property type="reaction ID" value="UER00210"/>
</dbReference>
<dbReference type="Proteomes" id="UP000001416">
    <property type="component" value="Chromosome"/>
</dbReference>
<dbReference type="GO" id="GO:0005737">
    <property type="term" value="C:cytoplasm"/>
    <property type="evidence" value="ECO:0007669"/>
    <property type="project" value="TreeGrafter"/>
</dbReference>
<dbReference type="GO" id="GO:0005524">
    <property type="term" value="F:ATP binding"/>
    <property type="evidence" value="ECO:0007669"/>
    <property type="project" value="UniProtKB-UniRule"/>
</dbReference>
<dbReference type="GO" id="GO:0004363">
    <property type="term" value="F:glutathione synthase activity"/>
    <property type="evidence" value="ECO:0007669"/>
    <property type="project" value="UniProtKB-UniRule"/>
</dbReference>
<dbReference type="GO" id="GO:0046872">
    <property type="term" value="F:metal ion binding"/>
    <property type="evidence" value="ECO:0007669"/>
    <property type="project" value="UniProtKB-KW"/>
</dbReference>
<dbReference type="FunFam" id="3.30.1490.20:FF:000009">
    <property type="entry name" value="Glutathione synthetase"/>
    <property type="match status" value="1"/>
</dbReference>
<dbReference type="Gene3D" id="3.40.50.20">
    <property type="match status" value="1"/>
</dbReference>
<dbReference type="Gene3D" id="3.30.1490.20">
    <property type="entry name" value="ATP-grasp fold, A domain"/>
    <property type="match status" value="1"/>
</dbReference>
<dbReference type="Gene3D" id="3.30.470.20">
    <property type="entry name" value="ATP-grasp fold, B domain"/>
    <property type="match status" value="1"/>
</dbReference>
<dbReference type="HAMAP" id="MF_00162">
    <property type="entry name" value="GSH_S"/>
    <property type="match status" value="1"/>
</dbReference>
<dbReference type="InterPro" id="IPR011761">
    <property type="entry name" value="ATP-grasp"/>
</dbReference>
<dbReference type="InterPro" id="IPR013815">
    <property type="entry name" value="ATP_grasp_subdomain_1"/>
</dbReference>
<dbReference type="InterPro" id="IPR006284">
    <property type="entry name" value="Glut_synth_pro"/>
</dbReference>
<dbReference type="InterPro" id="IPR004218">
    <property type="entry name" value="GSHS_ATP-bd"/>
</dbReference>
<dbReference type="InterPro" id="IPR004215">
    <property type="entry name" value="GSHS_N"/>
</dbReference>
<dbReference type="InterPro" id="IPR016185">
    <property type="entry name" value="PreATP-grasp_dom_sf"/>
</dbReference>
<dbReference type="NCBIfam" id="TIGR01380">
    <property type="entry name" value="glut_syn"/>
    <property type="match status" value="1"/>
</dbReference>
<dbReference type="NCBIfam" id="NF003573">
    <property type="entry name" value="PRK05246.1"/>
    <property type="match status" value="1"/>
</dbReference>
<dbReference type="PANTHER" id="PTHR21621:SF4">
    <property type="entry name" value="GLUTATHIONE SYNTHETASE"/>
    <property type="match status" value="1"/>
</dbReference>
<dbReference type="PANTHER" id="PTHR21621">
    <property type="entry name" value="RIBOSOMAL PROTEIN S6 MODIFICATION PROTEIN"/>
    <property type="match status" value="1"/>
</dbReference>
<dbReference type="Pfam" id="PF02955">
    <property type="entry name" value="GSH-S_ATP"/>
    <property type="match status" value="1"/>
</dbReference>
<dbReference type="Pfam" id="PF02951">
    <property type="entry name" value="GSH-S_N"/>
    <property type="match status" value="1"/>
</dbReference>
<dbReference type="SUPFAM" id="SSF56059">
    <property type="entry name" value="Glutathione synthetase ATP-binding domain-like"/>
    <property type="match status" value="1"/>
</dbReference>
<dbReference type="SUPFAM" id="SSF52440">
    <property type="entry name" value="PreATP-grasp domain"/>
    <property type="match status" value="1"/>
</dbReference>
<dbReference type="PROSITE" id="PS50975">
    <property type="entry name" value="ATP_GRASP"/>
    <property type="match status" value="1"/>
</dbReference>
<keyword id="KW-0067">ATP-binding</keyword>
<keyword id="KW-0317">Glutathione biosynthesis</keyword>
<keyword id="KW-0436">Ligase</keyword>
<keyword id="KW-0460">Magnesium</keyword>
<keyword id="KW-0464">Manganese</keyword>
<keyword id="KW-0479">Metal-binding</keyword>
<keyword id="KW-0547">Nucleotide-binding</keyword>
<keyword id="KW-1185">Reference proteome</keyword>
<evidence type="ECO:0000250" key="1"/>
<evidence type="ECO:0000255" key="2">
    <source>
        <dbReference type="HAMAP-Rule" id="MF_00162"/>
    </source>
</evidence>